<accession>B9EAQ8</accession>
<name>MECA_MACCJ</name>
<protein>
    <recommendedName>
        <fullName evidence="1">Adapter protein MecA</fullName>
    </recommendedName>
</protein>
<dbReference type="EMBL" id="AP009484">
    <property type="protein sequence ID" value="BAH17319.1"/>
    <property type="molecule type" value="Genomic_DNA"/>
</dbReference>
<dbReference type="RefSeq" id="WP_012656520.1">
    <property type="nucleotide sequence ID" value="NC_011999.1"/>
</dbReference>
<dbReference type="SMR" id="B9EAQ8"/>
<dbReference type="STRING" id="458233.MCCL_0612"/>
<dbReference type="GeneID" id="61129507"/>
<dbReference type="KEGG" id="mcl:MCCL_0612"/>
<dbReference type="eggNOG" id="COG4862">
    <property type="taxonomic scope" value="Bacteria"/>
</dbReference>
<dbReference type="HOGENOM" id="CLU_071496_2_1_9"/>
<dbReference type="OrthoDB" id="2360201at2"/>
<dbReference type="Proteomes" id="UP000001383">
    <property type="component" value="Chromosome"/>
</dbReference>
<dbReference type="GO" id="GO:0030674">
    <property type="term" value="F:protein-macromolecule adaptor activity"/>
    <property type="evidence" value="ECO:0007669"/>
    <property type="project" value="UniProtKB-UniRule"/>
</dbReference>
<dbReference type="Gene3D" id="3.30.70.1950">
    <property type="match status" value="1"/>
</dbReference>
<dbReference type="HAMAP" id="MF_01124">
    <property type="entry name" value="MecA"/>
    <property type="match status" value="1"/>
</dbReference>
<dbReference type="InterPro" id="IPR038471">
    <property type="entry name" value="MecA_C_sf"/>
</dbReference>
<dbReference type="InterPro" id="IPR008681">
    <property type="entry name" value="Neg-reg_MecA"/>
</dbReference>
<dbReference type="NCBIfam" id="NF002644">
    <property type="entry name" value="PRK02315.1-5"/>
    <property type="match status" value="1"/>
</dbReference>
<dbReference type="PANTHER" id="PTHR39161">
    <property type="entry name" value="ADAPTER PROTEIN MECA"/>
    <property type="match status" value="1"/>
</dbReference>
<dbReference type="PANTHER" id="PTHR39161:SF1">
    <property type="entry name" value="ADAPTER PROTEIN MECA 1"/>
    <property type="match status" value="1"/>
</dbReference>
<dbReference type="Pfam" id="PF05389">
    <property type="entry name" value="MecA"/>
    <property type="match status" value="1"/>
</dbReference>
<dbReference type="PIRSF" id="PIRSF029008">
    <property type="entry name" value="MecA"/>
    <property type="match status" value="1"/>
</dbReference>
<evidence type="ECO:0000255" key="1">
    <source>
        <dbReference type="HAMAP-Rule" id="MF_01124"/>
    </source>
</evidence>
<reference key="1">
    <citation type="journal article" date="2009" name="J. Bacteriol.">
        <title>Complete genome sequence of Macrococcus caseolyticus strain JCSCS5402, reflecting the ancestral genome of the human-pathogenic staphylococci.</title>
        <authorList>
            <person name="Baba T."/>
            <person name="Kuwahara-Arai K."/>
            <person name="Uchiyama I."/>
            <person name="Takeuchi F."/>
            <person name="Ito T."/>
            <person name="Hiramatsu K."/>
        </authorList>
    </citation>
    <scope>NUCLEOTIDE SEQUENCE [LARGE SCALE GENOMIC DNA]</scope>
    <source>
        <strain>JCSC5402</strain>
    </source>
</reference>
<comment type="function">
    <text evidence="1">Enables the recognition and targeting of unfolded and aggregated proteins to the ClpC protease or to other proteins involved in proteolysis.</text>
</comment>
<comment type="subunit">
    <text evidence="1">Homodimer.</text>
</comment>
<comment type="domain">
    <text>The N-terminal domain probably binds unfolded/aggregated proteins; the C-terminal domain interacts with ClpC.</text>
</comment>
<comment type="similarity">
    <text evidence="1">Belongs to the MecA family.</text>
</comment>
<sequence>MRIERVNESTLKFYLTYTDIEARGFKRDDLWTSRKKGEEFFWSVMEEVNQEEDFFFDGPLWIQVHAFDKGIEVVVTKSKNDDLQLPEDDSDLNIDEKVNDFINNSMHSDSELRDLLMRASEESTEQFFIVHFDDLEDVIQFSYHNYEDVDIEDLLYMYEGKYYYYVEFDDHMSEDAIHSYIAHLLEYANETQISHEQLDEYGKIVMSHNVKRQVKQYFKQ</sequence>
<organism>
    <name type="scientific">Macrococcus caseolyticus (strain JCSC5402)</name>
    <name type="common">Macrococcoides caseolyticum</name>
    <dbReference type="NCBI Taxonomy" id="458233"/>
    <lineage>
        <taxon>Bacteria</taxon>
        <taxon>Bacillati</taxon>
        <taxon>Bacillota</taxon>
        <taxon>Bacilli</taxon>
        <taxon>Bacillales</taxon>
        <taxon>Staphylococcaceae</taxon>
        <taxon>Macrococcoides</taxon>
    </lineage>
</organism>
<proteinExistence type="inferred from homology"/>
<keyword id="KW-1185">Reference proteome</keyword>
<gene>
    <name evidence="1" type="primary">mecA</name>
    <name type="ordered locus">MCCL_0612</name>
</gene>
<feature type="chain" id="PRO_1000164053" description="Adapter protein MecA">
    <location>
        <begin position="1"/>
        <end position="220"/>
    </location>
</feature>